<proteinExistence type="inferred from homology"/>
<evidence type="ECO:0000255" key="1">
    <source>
        <dbReference type="HAMAP-Rule" id="MF_00446"/>
    </source>
</evidence>
<comment type="function">
    <text evidence="1">Catalyzes the pyruvoyl-dependent decarboxylation of aspartate to produce beta-alanine.</text>
</comment>
<comment type="catalytic activity">
    <reaction evidence="1">
        <text>L-aspartate + H(+) = beta-alanine + CO2</text>
        <dbReference type="Rhea" id="RHEA:19497"/>
        <dbReference type="ChEBI" id="CHEBI:15378"/>
        <dbReference type="ChEBI" id="CHEBI:16526"/>
        <dbReference type="ChEBI" id="CHEBI:29991"/>
        <dbReference type="ChEBI" id="CHEBI:57966"/>
        <dbReference type="EC" id="4.1.1.11"/>
    </reaction>
</comment>
<comment type="cofactor">
    <cofactor evidence="1">
        <name>pyruvate</name>
        <dbReference type="ChEBI" id="CHEBI:15361"/>
    </cofactor>
    <text evidence="1">Binds 1 pyruvoyl group covalently per subunit.</text>
</comment>
<comment type="pathway">
    <text evidence="1">Cofactor biosynthesis; (R)-pantothenate biosynthesis; beta-alanine from L-aspartate: step 1/1.</text>
</comment>
<comment type="subunit">
    <text evidence="1">Heterooctamer of four alpha and four beta subunits.</text>
</comment>
<comment type="subcellular location">
    <subcellularLocation>
        <location evidence="1">Cytoplasm</location>
    </subcellularLocation>
</comment>
<comment type="PTM">
    <text evidence="1">Is synthesized initially as an inactive proenzyme, which is activated by self-cleavage at a specific serine bond to produce a beta-subunit with a hydroxyl group at its C-terminus and an alpha-subunit with a pyruvoyl group at its N-terminus.</text>
</comment>
<comment type="similarity">
    <text evidence="1">Belongs to the PanD family.</text>
</comment>
<keyword id="KW-0068">Autocatalytic cleavage</keyword>
<keyword id="KW-0963">Cytoplasm</keyword>
<keyword id="KW-0210">Decarboxylase</keyword>
<keyword id="KW-0456">Lyase</keyword>
<keyword id="KW-0566">Pantothenate biosynthesis</keyword>
<keyword id="KW-0670">Pyruvate</keyword>
<keyword id="KW-1185">Reference proteome</keyword>
<keyword id="KW-0704">Schiff base</keyword>
<keyword id="KW-0865">Zymogen</keyword>
<gene>
    <name evidence="1" type="primary">panD</name>
    <name type="ordered locus">Xaut_2340</name>
</gene>
<protein>
    <recommendedName>
        <fullName evidence="1">Aspartate 1-decarboxylase</fullName>
        <ecNumber evidence="1">4.1.1.11</ecNumber>
    </recommendedName>
    <alternativeName>
        <fullName evidence="1">Aspartate alpha-decarboxylase</fullName>
    </alternativeName>
    <component>
        <recommendedName>
            <fullName evidence="1">Aspartate 1-decarboxylase beta chain</fullName>
        </recommendedName>
    </component>
    <component>
        <recommendedName>
            <fullName evidence="1">Aspartate 1-decarboxylase alpha chain</fullName>
        </recommendedName>
    </component>
</protein>
<name>PAND_XANP2</name>
<organism>
    <name type="scientific">Xanthobacter autotrophicus (strain ATCC BAA-1158 / Py2)</name>
    <dbReference type="NCBI Taxonomy" id="78245"/>
    <lineage>
        <taxon>Bacteria</taxon>
        <taxon>Pseudomonadati</taxon>
        <taxon>Pseudomonadota</taxon>
        <taxon>Alphaproteobacteria</taxon>
        <taxon>Hyphomicrobiales</taxon>
        <taxon>Xanthobacteraceae</taxon>
        <taxon>Xanthobacter</taxon>
    </lineage>
</organism>
<dbReference type="EC" id="4.1.1.11" evidence="1"/>
<dbReference type="EMBL" id="CP000781">
    <property type="protein sequence ID" value="ABS67583.1"/>
    <property type="molecule type" value="Genomic_DNA"/>
</dbReference>
<dbReference type="SMR" id="A7IHU0"/>
<dbReference type="STRING" id="78245.Xaut_2340"/>
<dbReference type="KEGG" id="xau:Xaut_2340"/>
<dbReference type="eggNOG" id="COG0853">
    <property type="taxonomic scope" value="Bacteria"/>
</dbReference>
<dbReference type="HOGENOM" id="CLU_115305_1_0_5"/>
<dbReference type="OrthoDB" id="9803983at2"/>
<dbReference type="PhylomeDB" id="A7IHU0"/>
<dbReference type="UniPathway" id="UPA00028">
    <property type="reaction ID" value="UER00002"/>
</dbReference>
<dbReference type="Proteomes" id="UP000002417">
    <property type="component" value="Chromosome"/>
</dbReference>
<dbReference type="GO" id="GO:0005829">
    <property type="term" value="C:cytosol"/>
    <property type="evidence" value="ECO:0007669"/>
    <property type="project" value="TreeGrafter"/>
</dbReference>
<dbReference type="GO" id="GO:0004068">
    <property type="term" value="F:aspartate 1-decarboxylase activity"/>
    <property type="evidence" value="ECO:0007669"/>
    <property type="project" value="UniProtKB-UniRule"/>
</dbReference>
<dbReference type="GO" id="GO:0006523">
    <property type="term" value="P:alanine biosynthetic process"/>
    <property type="evidence" value="ECO:0007669"/>
    <property type="project" value="InterPro"/>
</dbReference>
<dbReference type="GO" id="GO:0015940">
    <property type="term" value="P:pantothenate biosynthetic process"/>
    <property type="evidence" value="ECO:0007669"/>
    <property type="project" value="UniProtKB-UniRule"/>
</dbReference>
<dbReference type="CDD" id="cd06919">
    <property type="entry name" value="Asp_decarbox"/>
    <property type="match status" value="1"/>
</dbReference>
<dbReference type="Gene3D" id="2.40.40.20">
    <property type="match status" value="1"/>
</dbReference>
<dbReference type="HAMAP" id="MF_00446">
    <property type="entry name" value="PanD"/>
    <property type="match status" value="1"/>
</dbReference>
<dbReference type="InterPro" id="IPR009010">
    <property type="entry name" value="Asp_de-COase-like_dom_sf"/>
</dbReference>
<dbReference type="InterPro" id="IPR003190">
    <property type="entry name" value="Asp_decarbox"/>
</dbReference>
<dbReference type="NCBIfam" id="TIGR00223">
    <property type="entry name" value="panD"/>
    <property type="match status" value="1"/>
</dbReference>
<dbReference type="PANTHER" id="PTHR21012">
    <property type="entry name" value="ASPARTATE 1-DECARBOXYLASE"/>
    <property type="match status" value="1"/>
</dbReference>
<dbReference type="PANTHER" id="PTHR21012:SF0">
    <property type="entry name" value="ASPARTATE 1-DECARBOXYLASE"/>
    <property type="match status" value="1"/>
</dbReference>
<dbReference type="Pfam" id="PF02261">
    <property type="entry name" value="Asp_decarbox"/>
    <property type="match status" value="1"/>
</dbReference>
<dbReference type="SUPFAM" id="SSF50692">
    <property type="entry name" value="ADC-like"/>
    <property type="match status" value="1"/>
</dbReference>
<sequence>MRKIVAGKLHGLTVTGADLNYHGSITLDPEHCEEAGILPLEFVEIWNRNSGARISTYVILGERGSRCCVLNGAAARTCQPGDEVIICNSVYVPEGEIVALRPRVLTFDKDNRVTSRLTYEVTRDSQGAYHFAVRDERGDEKPIPLRVEAS</sequence>
<reference key="1">
    <citation type="submission" date="2007-07" db="EMBL/GenBank/DDBJ databases">
        <title>Complete sequence of chromosome of Xanthobacter autotrophicus Py2.</title>
        <authorList>
            <consortium name="US DOE Joint Genome Institute"/>
            <person name="Copeland A."/>
            <person name="Lucas S."/>
            <person name="Lapidus A."/>
            <person name="Barry K."/>
            <person name="Glavina del Rio T."/>
            <person name="Hammon N."/>
            <person name="Israni S."/>
            <person name="Dalin E."/>
            <person name="Tice H."/>
            <person name="Pitluck S."/>
            <person name="Sims D."/>
            <person name="Brettin T."/>
            <person name="Bruce D."/>
            <person name="Detter J.C."/>
            <person name="Han C."/>
            <person name="Tapia R."/>
            <person name="Brainard J."/>
            <person name="Schmutz J."/>
            <person name="Larimer F."/>
            <person name="Land M."/>
            <person name="Hauser L."/>
            <person name="Kyrpides N."/>
            <person name="Kim E."/>
            <person name="Ensigns S.A."/>
            <person name="Richardson P."/>
        </authorList>
    </citation>
    <scope>NUCLEOTIDE SEQUENCE [LARGE SCALE GENOMIC DNA]</scope>
    <source>
        <strain>ATCC BAA-1158 / Py2</strain>
    </source>
</reference>
<feature type="chain" id="PRO_1000192059" description="Aspartate 1-decarboxylase beta chain" evidence="1">
    <location>
        <begin position="1"/>
        <end position="23"/>
    </location>
</feature>
<feature type="chain" id="PRO_1000192060" description="Aspartate 1-decarboxylase alpha chain" evidence="1">
    <location>
        <begin position="24"/>
        <end position="150"/>
    </location>
</feature>
<feature type="active site" description="Schiff-base intermediate with substrate; via pyruvic acid" evidence="1">
    <location>
        <position position="24"/>
    </location>
</feature>
<feature type="active site" description="Proton donor" evidence="1">
    <location>
        <position position="57"/>
    </location>
</feature>
<feature type="binding site" evidence="1">
    <location>
        <position position="56"/>
    </location>
    <ligand>
        <name>substrate</name>
    </ligand>
</feature>
<feature type="binding site" evidence="1">
    <location>
        <begin position="72"/>
        <end position="74"/>
    </location>
    <ligand>
        <name>substrate</name>
    </ligand>
</feature>
<feature type="modified residue" description="Pyruvic acid (Ser)" evidence="1">
    <location>
        <position position="24"/>
    </location>
</feature>
<accession>A7IHU0</accession>